<comment type="function">
    <text evidence="1">Required for replication-independent chromatin assembly and for the periodic repression of histone gene transcription during the cell cycle.</text>
</comment>
<comment type="subcellular location">
    <subcellularLocation>
        <location evidence="1">Nucleus</location>
    </subcellularLocation>
</comment>
<comment type="similarity">
    <text evidence="3">Belongs to the WD repeat HIR1 family.</text>
</comment>
<feature type="chain" id="PRO_0000286424" description="Protein HIRA">
    <location>
        <begin position="1"/>
        <end position="935"/>
    </location>
</feature>
<feature type="repeat" description="WD 1">
    <location>
        <begin position="14"/>
        <end position="58"/>
    </location>
</feature>
<feature type="repeat" description="WD 2">
    <location>
        <begin position="72"/>
        <end position="111"/>
    </location>
</feature>
<feature type="repeat" description="WD 3">
    <location>
        <begin position="131"/>
        <end position="170"/>
    </location>
</feature>
<feature type="repeat" description="WD 4">
    <location>
        <begin position="174"/>
        <end position="213"/>
    </location>
</feature>
<feature type="repeat" description="WD 5">
    <location>
        <begin position="222"/>
        <end position="261"/>
    </location>
</feature>
<feature type="repeat" description="WD 6">
    <location>
        <begin position="277"/>
        <end position="320"/>
    </location>
</feature>
<feature type="repeat" description="WD 7">
    <location>
        <begin position="325"/>
        <end position="362"/>
    </location>
</feature>
<feature type="region of interest" description="Disordered" evidence="2">
    <location>
        <begin position="431"/>
        <end position="556"/>
    </location>
</feature>
<feature type="compositionally biased region" description="Basic and acidic residues" evidence="2">
    <location>
        <begin position="439"/>
        <end position="468"/>
    </location>
</feature>
<feature type="compositionally biased region" description="Polar residues" evidence="2">
    <location>
        <begin position="480"/>
        <end position="492"/>
    </location>
</feature>
<feature type="compositionally biased region" description="Acidic residues" evidence="2">
    <location>
        <begin position="520"/>
        <end position="542"/>
    </location>
</feature>
<name>HIRA_CAEEL</name>
<reference key="1">
    <citation type="journal article" date="1998" name="Science">
        <title>Genome sequence of the nematode C. elegans: a platform for investigating biology.</title>
        <authorList>
            <consortium name="The C. elegans sequencing consortium"/>
        </authorList>
    </citation>
    <scope>NUCLEOTIDE SEQUENCE [LARGE SCALE GENOMIC DNA]</scope>
    <source>
        <strain>Bristol N2</strain>
    </source>
</reference>
<dbReference type="EMBL" id="BX284603">
    <property type="protein sequence ID" value="CCD72864.1"/>
    <property type="molecule type" value="Genomic_DNA"/>
</dbReference>
<dbReference type="PIR" id="E88451">
    <property type="entry name" value="E88451"/>
</dbReference>
<dbReference type="RefSeq" id="NP_498101.2">
    <property type="nucleotide sequence ID" value="NM_065700.7"/>
</dbReference>
<dbReference type="SMR" id="Q09589"/>
<dbReference type="BioGRID" id="40940">
    <property type="interactions" value="6"/>
</dbReference>
<dbReference type="DIP" id="DIP-26906N"/>
<dbReference type="FunCoup" id="Q09589">
    <property type="interactions" value="2896"/>
</dbReference>
<dbReference type="STRING" id="6239.K10D2.1a.1"/>
<dbReference type="PaxDb" id="6239-K10D2.1a"/>
<dbReference type="PeptideAtlas" id="Q09589"/>
<dbReference type="EnsemblMetazoa" id="K10D2.1a.1">
    <property type="protein sequence ID" value="K10D2.1a.1"/>
    <property type="gene ID" value="WBGene00019627"/>
</dbReference>
<dbReference type="GeneID" id="175709"/>
<dbReference type="KEGG" id="cel:CELE_K10D2.1"/>
<dbReference type="UCSC" id="K10D2.1a">
    <property type="organism name" value="c. elegans"/>
</dbReference>
<dbReference type="AGR" id="WB:WBGene00019627"/>
<dbReference type="CTD" id="175709"/>
<dbReference type="WormBase" id="K10D2.1a">
    <property type="protein sequence ID" value="CE43736"/>
    <property type="gene ID" value="WBGene00019627"/>
    <property type="gene designation" value="hira-1"/>
</dbReference>
<dbReference type="eggNOG" id="KOG0973">
    <property type="taxonomic scope" value="Eukaryota"/>
</dbReference>
<dbReference type="GeneTree" id="ENSGT00550000074919"/>
<dbReference type="InParanoid" id="Q09589"/>
<dbReference type="OMA" id="WVTHDGY"/>
<dbReference type="OrthoDB" id="1741719at2759"/>
<dbReference type="PhylomeDB" id="Q09589"/>
<dbReference type="Reactome" id="R-CEL-2559584">
    <property type="pathway name" value="Formation of Senescence-Associated Heterochromatin Foci (SAHF)"/>
</dbReference>
<dbReference type="PRO" id="PR:Q09589"/>
<dbReference type="Proteomes" id="UP000001940">
    <property type="component" value="Chromosome III"/>
</dbReference>
<dbReference type="Bgee" id="WBGene00019627">
    <property type="expression patterns" value="Expressed in adult organism and 4 other cell types or tissues"/>
</dbReference>
<dbReference type="ExpressionAtlas" id="Q09589">
    <property type="expression patterns" value="baseline and differential"/>
</dbReference>
<dbReference type="GO" id="GO:0000785">
    <property type="term" value="C:chromatin"/>
    <property type="evidence" value="ECO:0000318"/>
    <property type="project" value="GO_Central"/>
</dbReference>
<dbReference type="GO" id="GO:0000417">
    <property type="term" value="C:HIR complex"/>
    <property type="evidence" value="ECO:0000318"/>
    <property type="project" value="GO_Central"/>
</dbReference>
<dbReference type="GO" id="GO:0005634">
    <property type="term" value="C:nucleus"/>
    <property type="evidence" value="ECO:0007669"/>
    <property type="project" value="UniProtKB-SubCell"/>
</dbReference>
<dbReference type="GO" id="GO:0006338">
    <property type="term" value="P:chromatin remodeling"/>
    <property type="evidence" value="ECO:0000318"/>
    <property type="project" value="GO_Central"/>
</dbReference>
<dbReference type="GO" id="GO:0006351">
    <property type="term" value="P:DNA-templated transcription"/>
    <property type="evidence" value="ECO:0007669"/>
    <property type="project" value="InterPro"/>
</dbReference>
<dbReference type="GO" id="GO:0006355">
    <property type="term" value="P:regulation of DNA-templated transcription"/>
    <property type="evidence" value="ECO:0007669"/>
    <property type="project" value="InterPro"/>
</dbReference>
<dbReference type="FunFam" id="2.130.10.10:FF:002935">
    <property type="entry name" value="Protein HIRA"/>
    <property type="match status" value="1"/>
</dbReference>
<dbReference type="Gene3D" id="2.130.10.10">
    <property type="entry name" value="YVTN repeat-like/Quinoprotein amine dehydrogenase"/>
    <property type="match status" value="2"/>
</dbReference>
<dbReference type="InterPro" id="IPR055410">
    <property type="entry name" value="CAF1B_HIR1_beta-prop"/>
</dbReference>
<dbReference type="InterPro" id="IPR031120">
    <property type="entry name" value="HIR1-like"/>
</dbReference>
<dbReference type="InterPro" id="IPR011494">
    <property type="entry name" value="HIRA-like_C"/>
</dbReference>
<dbReference type="InterPro" id="IPR019015">
    <property type="entry name" value="HIRA_B_motif"/>
</dbReference>
<dbReference type="InterPro" id="IPR015943">
    <property type="entry name" value="WD40/YVTN_repeat-like_dom_sf"/>
</dbReference>
<dbReference type="InterPro" id="IPR036322">
    <property type="entry name" value="WD40_repeat_dom_sf"/>
</dbReference>
<dbReference type="InterPro" id="IPR001680">
    <property type="entry name" value="WD40_rpt"/>
</dbReference>
<dbReference type="PANTHER" id="PTHR13831">
    <property type="entry name" value="MEMBER OF THE HIR1 FAMILY OF WD-REPEAT PROTEINS"/>
    <property type="match status" value="1"/>
</dbReference>
<dbReference type="PANTHER" id="PTHR13831:SF0">
    <property type="entry name" value="PROTEIN HIRA"/>
    <property type="match status" value="1"/>
</dbReference>
<dbReference type="Pfam" id="PF24105">
    <property type="entry name" value="Beta-prop_CAF1B_HIR1"/>
    <property type="match status" value="1"/>
</dbReference>
<dbReference type="Pfam" id="PF07569">
    <property type="entry name" value="Hira"/>
    <property type="match status" value="1"/>
</dbReference>
<dbReference type="Pfam" id="PF09453">
    <property type="entry name" value="HIRA_B"/>
    <property type="match status" value="1"/>
</dbReference>
<dbReference type="SMART" id="SM00320">
    <property type="entry name" value="WD40"/>
    <property type="match status" value="6"/>
</dbReference>
<dbReference type="SUPFAM" id="SSF50978">
    <property type="entry name" value="WD40 repeat-like"/>
    <property type="match status" value="2"/>
</dbReference>
<dbReference type="PROSITE" id="PS00678">
    <property type="entry name" value="WD_REPEATS_1"/>
    <property type="match status" value="1"/>
</dbReference>
<dbReference type="PROSITE" id="PS50082">
    <property type="entry name" value="WD_REPEATS_2"/>
    <property type="match status" value="2"/>
</dbReference>
<dbReference type="PROSITE" id="PS50294">
    <property type="entry name" value="WD_REPEATS_REGION"/>
    <property type="match status" value="1"/>
</dbReference>
<accession>Q09589</accession>
<accession>C4ALD2</accession>
<accession>Q8IG07</accession>
<organism>
    <name type="scientific">Caenorhabditis elegans</name>
    <dbReference type="NCBI Taxonomy" id="6239"/>
    <lineage>
        <taxon>Eukaryota</taxon>
        <taxon>Metazoa</taxon>
        <taxon>Ecdysozoa</taxon>
        <taxon>Nematoda</taxon>
        <taxon>Chromadorea</taxon>
        <taxon>Rhabditida</taxon>
        <taxon>Rhabditina</taxon>
        <taxon>Rhabditomorpha</taxon>
        <taxon>Rhabditoidea</taxon>
        <taxon>Rhabditidae</taxon>
        <taxon>Peloderinae</taxon>
        <taxon>Caenorhabditis</taxon>
    </lineage>
</organism>
<sequence length="935" mass="103430">MGDVYVTSPTFVGHDTGSILAIDCHPSGKKFITCGQKARTSNGLVVVWNAEPVLDKKKASNENVPKLLFQVESQSQSNSCRWSPDGKRFAFGSDDSSVSVWEYVGLINSMGSITGGAQNVERYKECCVLRGHSMEVLTVEWSPNGKYLASGSIDYRIIIYNARKLPDRITVLNDIQLPVKGLSWDPIGKYLASLEGDKKLRFWATDSWQCVKSVTEPFESNIEETMLTRLDWSPDGKYLMTPAAVRSGKPLIKLIQRQTWKSDQFLAGHHKGTTCVRAMPRLIEANLKNGKRMQLTCAAVGSRDKSISIWVFPGTLKPLFVINNIFNHTVMDFAWCGRNLLACSQDGTVKVIHLSESVIGEMISNEAMSDLCYQIYSIRPPRYELTDKEEDESQDSFNLSDLSSSANNASFVTCPEDVLIKRKKLVAAQQSSDIQLTKSMEDNSKENESKNSEKTMMEERNKQIDVRKDGKRRIQPVFCGTTTADPMTSLSSEGKKTVAPPPAKRKALAPAVPAKKGEVDLEDSSDSDDDDEEEEEDMEISDIESVRNKKRKVPATTSQPMLALDLKKPALRPMEPKSLKTQEGTVLMEAPEQQPKLSQHVVDRKGMFVEIDNRWKHGGVETTQIKLIKKKQQTAENEDDMMDGERRVNHECLWMAVLGSPVIIVAANKHNVVLGCGDKCLRVYRTFCGTHIVSLRLDSLPVLIGVTEHAAYALTENGRLSTWNLKLGKAVVTRQPLFDCVEASTDNSLISADVSETGVPLIVFSNGSIFTFNVSLSCWIQAITTNVLGRLTSPISDAQLSCSNGTTNSAGPLVRLLKRMRKQATAPGVAPQVVKAVKESQLEQLLHCAEQLGNPQDYQTMLMLYVETLCEGGSEKKLKNILNDLSRSGAPMQVCGLRRSALYDDVTRMIKLKQPAIAARIVAGVAASTTTKSLF</sequence>
<keyword id="KW-0156">Chromatin regulator</keyword>
<keyword id="KW-0539">Nucleus</keyword>
<keyword id="KW-1185">Reference proteome</keyword>
<keyword id="KW-0677">Repeat</keyword>
<keyword id="KW-0678">Repressor</keyword>
<keyword id="KW-0804">Transcription</keyword>
<keyword id="KW-0805">Transcription regulation</keyword>
<keyword id="KW-0853">WD repeat</keyword>
<protein>
    <recommendedName>
        <fullName evidence="3">Protein HIRA</fullName>
    </recommendedName>
    <alternativeName>
        <fullName evidence="4">Histone cell cycle regulator 1 homolog</fullName>
    </alternativeName>
</protein>
<gene>
    <name evidence="4" type="primary">hira-1</name>
    <name evidence="4" type="ORF">K10D2.1</name>
</gene>
<evidence type="ECO:0000250" key="1"/>
<evidence type="ECO:0000256" key="2">
    <source>
        <dbReference type="SAM" id="MobiDB-lite"/>
    </source>
</evidence>
<evidence type="ECO:0000305" key="3"/>
<evidence type="ECO:0000312" key="4">
    <source>
        <dbReference type="WormBase" id="K10D2.1a"/>
    </source>
</evidence>
<proteinExistence type="inferred from homology"/>